<feature type="chain" id="PRO_0000182261" description="Transcriptional repressor NrdR">
    <location>
        <begin position="1"/>
        <end position="153"/>
    </location>
</feature>
<feature type="domain" description="ATP-cone" evidence="1">
    <location>
        <begin position="49"/>
        <end position="139"/>
    </location>
</feature>
<feature type="zinc finger region" evidence="1">
    <location>
        <begin position="3"/>
        <end position="34"/>
    </location>
</feature>
<evidence type="ECO:0000255" key="1">
    <source>
        <dbReference type="HAMAP-Rule" id="MF_00440"/>
    </source>
</evidence>
<sequence>MRCPSCSHNGTRVLDSRPVDEGRSIRRRRECESCLSRFTTFERVEESPLIVVKKEGTREEFNKEKILRGLIKACEKRPVSLRQLEEVTQSVERELRNLGISEVKSDMIGEIVMEELRDIDDVAYVRFASVYRQFKDLNVFIEELKDILQKERE</sequence>
<proteinExistence type="inferred from homology"/>
<reference key="1">
    <citation type="journal article" date="2003" name="Nature">
        <title>Genome sequence of Bacillus cereus and comparative analysis with Bacillus anthracis.</title>
        <authorList>
            <person name="Ivanova N."/>
            <person name="Sorokin A."/>
            <person name="Anderson I."/>
            <person name="Galleron N."/>
            <person name="Candelon B."/>
            <person name="Kapatral V."/>
            <person name="Bhattacharyya A."/>
            <person name="Reznik G."/>
            <person name="Mikhailova N."/>
            <person name="Lapidus A."/>
            <person name="Chu L."/>
            <person name="Mazur M."/>
            <person name="Goltsman E."/>
            <person name="Larsen N."/>
            <person name="D'Souza M."/>
            <person name="Walunas T."/>
            <person name="Grechkin Y."/>
            <person name="Pusch G."/>
            <person name="Haselkorn R."/>
            <person name="Fonstein M."/>
            <person name="Ehrlich S.D."/>
            <person name="Overbeek R."/>
            <person name="Kyrpides N.C."/>
        </authorList>
    </citation>
    <scope>NUCLEOTIDE SEQUENCE [LARGE SCALE GENOMIC DNA]</scope>
    <source>
        <strain>ATCC 14579 / DSM 31 / CCUG 7414 / JCM 2152 / NBRC 15305 / NCIMB 9373 / NCTC 2599 / NRRL B-3711</strain>
    </source>
</reference>
<gene>
    <name evidence="1" type="primary">nrdR</name>
    <name type="ordered locus">BC_4581</name>
</gene>
<name>NRDR_BACCR</name>
<organism>
    <name type="scientific">Bacillus cereus (strain ATCC 14579 / DSM 31 / CCUG 7414 / JCM 2152 / NBRC 15305 / NCIMB 9373 / NCTC 2599 / NRRL B-3711)</name>
    <dbReference type="NCBI Taxonomy" id="226900"/>
    <lineage>
        <taxon>Bacteria</taxon>
        <taxon>Bacillati</taxon>
        <taxon>Bacillota</taxon>
        <taxon>Bacilli</taxon>
        <taxon>Bacillales</taxon>
        <taxon>Bacillaceae</taxon>
        <taxon>Bacillus</taxon>
        <taxon>Bacillus cereus group</taxon>
    </lineage>
</organism>
<keyword id="KW-0067">ATP-binding</keyword>
<keyword id="KW-0238">DNA-binding</keyword>
<keyword id="KW-0479">Metal-binding</keyword>
<keyword id="KW-0547">Nucleotide-binding</keyword>
<keyword id="KW-1185">Reference proteome</keyword>
<keyword id="KW-0678">Repressor</keyword>
<keyword id="KW-0804">Transcription</keyword>
<keyword id="KW-0805">Transcription regulation</keyword>
<keyword id="KW-0862">Zinc</keyword>
<keyword id="KW-0863">Zinc-finger</keyword>
<accession>Q817H0</accession>
<comment type="function">
    <text evidence="1">Negatively regulates transcription of bacterial ribonucleotide reductase nrd genes and operons by binding to NrdR-boxes.</text>
</comment>
<comment type="cofactor">
    <cofactor evidence="1">
        <name>Zn(2+)</name>
        <dbReference type="ChEBI" id="CHEBI:29105"/>
    </cofactor>
    <text evidence="1">Binds 1 zinc ion.</text>
</comment>
<comment type="similarity">
    <text evidence="1">Belongs to the NrdR family.</text>
</comment>
<dbReference type="EMBL" id="AE016877">
    <property type="protein sequence ID" value="AAP11488.1"/>
    <property type="molecule type" value="Genomic_DNA"/>
</dbReference>
<dbReference type="RefSeq" id="NP_834287.1">
    <property type="nucleotide sequence ID" value="NC_004722.1"/>
</dbReference>
<dbReference type="RefSeq" id="WP_001203687.1">
    <property type="nucleotide sequence ID" value="NZ_CP138336.1"/>
</dbReference>
<dbReference type="SMR" id="Q817H0"/>
<dbReference type="STRING" id="226900.BC_4581"/>
<dbReference type="GeneID" id="93006530"/>
<dbReference type="KEGG" id="bce:BC4581"/>
<dbReference type="PATRIC" id="fig|226900.8.peg.4742"/>
<dbReference type="HOGENOM" id="CLU_108412_0_0_9"/>
<dbReference type="OrthoDB" id="9807461at2"/>
<dbReference type="PRO" id="PR:Q817H0"/>
<dbReference type="Proteomes" id="UP000001417">
    <property type="component" value="Chromosome"/>
</dbReference>
<dbReference type="GO" id="GO:0005524">
    <property type="term" value="F:ATP binding"/>
    <property type="evidence" value="ECO:0007669"/>
    <property type="project" value="UniProtKB-KW"/>
</dbReference>
<dbReference type="GO" id="GO:0003690">
    <property type="term" value="F:double-stranded DNA binding"/>
    <property type="evidence" value="ECO:0000318"/>
    <property type="project" value="GO_Central"/>
</dbReference>
<dbReference type="GO" id="GO:0008270">
    <property type="term" value="F:zinc ion binding"/>
    <property type="evidence" value="ECO:0007669"/>
    <property type="project" value="UniProtKB-UniRule"/>
</dbReference>
<dbReference type="GO" id="GO:0045892">
    <property type="term" value="P:negative regulation of DNA-templated transcription"/>
    <property type="evidence" value="ECO:0000318"/>
    <property type="project" value="GO_Central"/>
</dbReference>
<dbReference type="HAMAP" id="MF_00440">
    <property type="entry name" value="NrdR"/>
    <property type="match status" value="1"/>
</dbReference>
<dbReference type="InterPro" id="IPR005144">
    <property type="entry name" value="ATP-cone_dom"/>
</dbReference>
<dbReference type="InterPro" id="IPR055173">
    <property type="entry name" value="NrdR-like_N"/>
</dbReference>
<dbReference type="InterPro" id="IPR003796">
    <property type="entry name" value="RNR_NrdR-like"/>
</dbReference>
<dbReference type="NCBIfam" id="TIGR00244">
    <property type="entry name" value="transcriptional regulator NrdR"/>
    <property type="match status" value="1"/>
</dbReference>
<dbReference type="PANTHER" id="PTHR30455">
    <property type="entry name" value="TRANSCRIPTIONAL REPRESSOR NRDR"/>
    <property type="match status" value="1"/>
</dbReference>
<dbReference type="PANTHER" id="PTHR30455:SF2">
    <property type="entry name" value="TRANSCRIPTIONAL REPRESSOR NRDR"/>
    <property type="match status" value="1"/>
</dbReference>
<dbReference type="Pfam" id="PF03477">
    <property type="entry name" value="ATP-cone"/>
    <property type="match status" value="1"/>
</dbReference>
<dbReference type="Pfam" id="PF22811">
    <property type="entry name" value="Zn_ribbon_NrdR"/>
    <property type="match status" value="1"/>
</dbReference>
<dbReference type="PROSITE" id="PS51161">
    <property type="entry name" value="ATP_CONE"/>
    <property type="match status" value="1"/>
</dbReference>
<protein>
    <recommendedName>
        <fullName evidence="1">Transcriptional repressor NrdR</fullName>
    </recommendedName>
</protein>